<accession>B0K460</accession>
<protein>
    <recommendedName>
        <fullName evidence="1">Putative septation protein SpoVG</fullName>
    </recommendedName>
</protein>
<dbReference type="EMBL" id="CP000923">
    <property type="protein sequence ID" value="ABY91893.1"/>
    <property type="molecule type" value="Genomic_DNA"/>
</dbReference>
<dbReference type="RefSeq" id="WP_003867601.1">
    <property type="nucleotide sequence ID" value="NC_010320.1"/>
</dbReference>
<dbReference type="SMR" id="B0K460"/>
<dbReference type="KEGG" id="tex:Teth514_0585"/>
<dbReference type="HOGENOM" id="CLU_103669_2_1_9"/>
<dbReference type="Proteomes" id="UP000002155">
    <property type="component" value="Chromosome"/>
</dbReference>
<dbReference type="GO" id="GO:0000917">
    <property type="term" value="P:division septum assembly"/>
    <property type="evidence" value="ECO:0007669"/>
    <property type="project" value="UniProtKB-KW"/>
</dbReference>
<dbReference type="GO" id="GO:0030435">
    <property type="term" value="P:sporulation resulting in formation of a cellular spore"/>
    <property type="evidence" value="ECO:0007669"/>
    <property type="project" value="InterPro"/>
</dbReference>
<dbReference type="Gene3D" id="3.30.1120.40">
    <property type="entry name" value="Stage V sporulation protein G"/>
    <property type="match status" value="1"/>
</dbReference>
<dbReference type="HAMAP" id="MF_00819">
    <property type="entry name" value="SpoVG"/>
    <property type="match status" value="1"/>
</dbReference>
<dbReference type="InterPro" id="IPR007170">
    <property type="entry name" value="SpoVG"/>
</dbReference>
<dbReference type="InterPro" id="IPR036751">
    <property type="entry name" value="SpoVG_sf"/>
</dbReference>
<dbReference type="NCBIfam" id="NF009749">
    <property type="entry name" value="PRK13259.1"/>
    <property type="match status" value="1"/>
</dbReference>
<dbReference type="PANTHER" id="PTHR38429">
    <property type="entry name" value="SEPTATION PROTEIN SPOVG-RELATED"/>
    <property type="match status" value="1"/>
</dbReference>
<dbReference type="PANTHER" id="PTHR38429:SF1">
    <property type="entry name" value="SEPTATION PROTEIN SPOVG-RELATED"/>
    <property type="match status" value="1"/>
</dbReference>
<dbReference type="Pfam" id="PF04026">
    <property type="entry name" value="SpoVG"/>
    <property type="match status" value="1"/>
</dbReference>
<dbReference type="SUPFAM" id="SSF160537">
    <property type="entry name" value="SpoVG-like"/>
    <property type="match status" value="1"/>
</dbReference>
<feature type="chain" id="PRO_1000196506" description="Putative septation protein SpoVG">
    <location>
        <begin position="1"/>
        <end position="92"/>
    </location>
</feature>
<comment type="function">
    <text evidence="1">Could be involved in septation.</text>
</comment>
<comment type="similarity">
    <text evidence="1">Belongs to the SpoVG family.</text>
</comment>
<evidence type="ECO:0000255" key="1">
    <source>
        <dbReference type="HAMAP-Rule" id="MF_00819"/>
    </source>
</evidence>
<reference key="1">
    <citation type="submission" date="2008-01" db="EMBL/GenBank/DDBJ databases">
        <title>Complete sequence of Thermoanaerobacter sp. X514.</title>
        <authorList>
            <consortium name="US DOE Joint Genome Institute"/>
            <person name="Copeland A."/>
            <person name="Lucas S."/>
            <person name="Lapidus A."/>
            <person name="Barry K."/>
            <person name="Glavina del Rio T."/>
            <person name="Dalin E."/>
            <person name="Tice H."/>
            <person name="Pitluck S."/>
            <person name="Bruce D."/>
            <person name="Goodwin L."/>
            <person name="Saunders E."/>
            <person name="Brettin T."/>
            <person name="Detter J.C."/>
            <person name="Han C."/>
            <person name="Schmutz J."/>
            <person name="Larimer F."/>
            <person name="Land M."/>
            <person name="Hauser L."/>
            <person name="Kyrpides N."/>
            <person name="Kim E."/>
            <person name="Hemme C."/>
            <person name="Fields M.W."/>
            <person name="He Z."/>
            <person name="Zhou J."/>
            <person name="Richardson P."/>
        </authorList>
    </citation>
    <scope>NUCLEOTIDE SEQUENCE [LARGE SCALE GENOMIC DNA]</scope>
    <source>
        <strain>X514</strain>
    </source>
</reference>
<gene>
    <name evidence="1" type="primary">spoVG</name>
    <name type="ordered locus">Teth514_0585</name>
</gene>
<name>SP5G_THEPX</name>
<sequence length="92" mass="10497">MEITDVRVRKLNEEGKMKAVVSVTFDNEFVVHDIKVIEGQNGLFIAMPSRKTPEGEFKDIAHPINSDTRNKLQSAILKEYEKAKEQEAAHKE</sequence>
<keyword id="KW-0131">Cell cycle</keyword>
<keyword id="KW-0132">Cell division</keyword>
<keyword id="KW-0717">Septation</keyword>
<organism>
    <name type="scientific">Thermoanaerobacter sp. (strain X514)</name>
    <dbReference type="NCBI Taxonomy" id="399726"/>
    <lineage>
        <taxon>Bacteria</taxon>
        <taxon>Bacillati</taxon>
        <taxon>Bacillota</taxon>
        <taxon>Clostridia</taxon>
        <taxon>Thermoanaerobacterales</taxon>
        <taxon>Thermoanaerobacteraceae</taxon>
        <taxon>Thermoanaerobacter</taxon>
    </lineage>
</organism>
<proteinExistence type="inferred from homology"/>